<name>GUN1_ORYSJ</name>
<reference key="1">
    <citation type="journal article" date="2002" name="Nature">
        <title>The genome sequence and structure of rice chromosome 1.</title>
        <authorList>
            <person name="Sasaki T."/>
            <person name="Matsumoto T."/>
            <person name="Yamamoto K."/>
            <person name="Sakata K."/>
            <person name="Baba T."/>
            <person name="Katayose Y."/>
            <person name="Wu J."/>
            <person name="Niimura Y."/>
            <person name="Cheng Z."/>
            <person name="Nagamura Y."/>
            <person name="Antonio B.A."/>
            <person name="Kanamori H."/>
            <person name="Hosokawa S."/>
            <person name="Masukawa M."/>
            <person name="Arikawa K."/>
            <person name="Chiden Y."/>
            <person name="Hayashi M."/>
            <person name="Okamoto M."/>
            <person name="Ando T."/>
            <person name="Aoki H."/>
            <person name="Arita K."/>
            <person name="Hamada M."/>
            <person name="Harada C."/>
            <person name="Hijishita S."/>
            <person name="Honda M."/>
            <person name="Ichikawa Y."/>
            <person name="Idonuma A."/>
            <person name="Iijima M."/>
            <person name="Ikeda M."/>
            <person name="Ikeno M."/>
            <person name="Ito S."/>
            <person name="Ito T."/>
            <person name="Ito Y."/>
            <person name="Ito Y."/>
            <person name="Iwabuchi A."/>
            <person name="Kamiya K."/>
            <person name="Karasawa W."/>
            <person name="Katagiri S."/>
            <person name="Kikuta A."/>
            <person name="Kobayashi N."/>
            <person name="Kono I."/>
            <person name="Machita K."/>
            <person name="Maehara T."/>
            <person name="Mizuno H."/>
            <person name="Mizubayashi T."/>
            <person name="Mukai Y."/>
            <person name="Nagasaki H."/>
            <person name="Nakashima M."/>
            <person name="Nakama Y."/>
            <person name="Nakamichi Y."/>
            <person name="Nakamura M."/>
            <person name="Namiki N."/>
            <person name="Negishi M."/>
            <person name="Ohta I."/>
            <person name="Ono N."/>
            <person name="Saji S."/>
            <person name="Sakai K."/>
            <person name="Shibata M."/>
            <person name="Shimokawa T."/>
            <person name="Shomura A."/>
            <person name="Song J."/>
            <person name="Takazaki Y."/>
            <person name="Terasawa K."/>
            <person name="Tsuji K."/>
            <person name="Waki K."/>
            <person name="Yamagata H."/>
            <person name="Yamane H."/>
            <person name="Yoshiki S."/>
            <person name="Yoshihara R."/>
            <person name="Yukawa K."/>
            <person name="Zhong H."/>
            <person name="Iwama H."/>
            <person name="Endo T."/>
            <person name="Ito H."/>
            <person name="Hahn J.H."/>
            <person name="Kim H.-I."/>
            <person name="Eun M.-Y."/>
            <person name="Yano M."/>
            <person name="Jiang J."/>
            <person name="Gojobori T."/>
        </authorList>
    </citation>
    <scope>NUCLEOTIDE SEQUENCE [LARGE SCALE GENOMIC DNA]</scope>
    <source>
        <strain>cv. Nipponbare</strain>
    </source>
</reference>
<reference key="2">
    <citation type="journal article" date="2005" name="Nature">
        <title>The map-based sequence of the rice genome.</title>
        <authorList>
            <consortium name="International rice genome sequencing project (IRGSP)"/>
        </authorList>
    </citation>
    <scope>NUCLEOTIDE SEQUENCE [LARGE SCALE GENOMIC DNA]</scope>
    <source>
        <strain>cv. Nipponbare</strain>
    </source>
</reference>
<reference key="3">
    <citation type="journal article" date="2008" name="Nucleic Acids Res.">
        <title>The rice annotation project database (RAP-DB): 2008 update.</title>
        <authorList>
            <consortium name="The rice annotation project (RAP)"/>
        </authorList>
    </citation>
    <scope>GENOME REANNOTATION</scope>
    <source>
        <strain>cv. Nipponbare</strain>
    </source>
</reference>
<reference key="4">
    <citation type="journal article" date="2013" name="Rice">
        <title>Improvement of the Oryza sativa Nipponbare reference genome using next generation sequence and optical map data.</title>
        <authorList>
            <person name="Kawahara Y."/>
            <person name="de la Bastide M."/>
            <person name="Hamilton J.P."/>
            <person name="Kanamori H."/>
            <person name="McCombie W.R."/>
            <person name="Ouyang S."/>
            <person name="Schwartz D.C."/>
            <person name="Tanaka T."/>
            <person name="Wu J."/>
            <person name="Zhou S."/>
            <person name="Childs K.L."/>
            <person name="Davidson R.M."/>
            <person name="Lin H."/>
            <person name="Quesada-Ocampo L."/>
            <person name="Vaillancourt B."/>
            <person name="Sakai H."/>
            <person name="Lee S.S."/>
            <person name="Kim J."/>
            <person name="Numa H."/>
            <person name="Itoh T."/>
            <person name="Buell C.R."/>
            <person name="Matsumoto T."/>
        </authorList>
    </citation>
    <scope>GENOME REANNOTATION</scope>
    <source>
        <strain>cv. Nipponbare</strain>
    </source>
</reference>
<reference key="5">
    <citation type="journal article" date="2005" name="PLoS Biol.">
        <title>The genomes of Oryza sativa: a history of duplications.</title>
        <authorList>
            <person name="Yu J."/>
            <person name="Wang J."/>
            <person name="Lin W."/>
            <person name="Li S."/>
            <person name="Li H."/>
            <person name="Zhou J."/>
            <person name="Ni P."/>
            <person name="Dong W."/>
            <person name="Hu S."/>
            <person name="Zeng C."/>
            <person name="Zhang J."/>
            <person name="Zhang Y."/>
            <person name="Li R."/>
            <person name="Xu Z."/>
            <person name="Li S."/>
            <person name="Li X."/>
            <person name="Zheng H."/>
            <person name="Cong L."/>
            <person name="Lin L."/>
            <person name="Yin J."/>
            <person name="Geng J."/>
            <person name="Li G."/>
            <person name="Shi J."/>
            <person name="Liu J."/>
            <person name="Lv H."/>
            <person name="Li J."/>
            <person name="Wang J."/>
            <person name="Deng Y."/>
            <person name="Ran L."/>
            <person name="Shi X."/>
            <person name="Wang X."/>
            <person name="Wu Q."/>
            <person name="Li C."/>
            <person name="Ren X."/>
            <person name="Wang J."/>
            <person name="Wang X."/>
            <person name="Li D."/>
            <person name="Liu D."/>
            <person name="Zhang X."/>
            <person name="Ji Z."/>
            <person name="Zhao W."/>
            <person name="Sun Y."/>
            <person name="Zhang Z."/>
            <person name="Bao J."/>
            <person name="Han Y."/>
            <person name="Dong L."/>
            <person name="Ji J."/>
            <person name="Chen P."/>
            <person name="Wu S."/>
            <person name="Liu J."/>
            <person name="Xiao Y."/>
            <person name="Bu D."/>
            <person name="Tan J."/>
            <person name="Yang L."/>
            <person name="Ye C."/>
            <person name="Zhang J."/>
            <person name="Xu J."/>
            <person name="Zhou Y."/>
            <person name="Yu Y."/>
            <person name="Zhang B."/>
            <person name="Zhuang S."/>
            <person name="Wei H."/>
            <person name="Liu B."/>
            <person name="Lei M."/>
            <person name="Yu H."/>
            <person name="Li Y."/>
            <person name="Xu H."/>
            <person name="Wei S."/>
            <person name="He X."/>
            <person name="Fang L."/>
            <person name="Zhang Z."/>
            <person name="Zhang Y."/>
            <person name="Huang X."/>
            <person name="Su Z."/>
            <person name="Tong W."/>
            <person name="Li J."/>
            <person name="Tong Z."/>
            <person name="Li S."/>
            <person name="Ye J."/>
            <person name="Wang L."/>
            <person name="Fang L."/>
            <person name="Lei T."/>
            <person name="Chen C.-S."/>
            <person name="Chen H.-C."/>
            <person name="Xu Z."/>
            <person name="Li H."/>
            <person name="Huang H."/>
            <person name="Zhang F."/>
            <person name="Xu H."/>
            <person name="Li N."/>
            <person name="Zhao C."/>
            <person name="Li S."/>
            <person name="Dong L."/>
            <person name="Huang Y."/>
            <person name="Li L."/>
            <person name="Xi Y."/>
            <person name="Qi Q."/>
            <person name="Li W."/>
            <person name="Zhang B."/>
            <person name="Hu W."/>
            <person name="Zhang Y."/>
            <person name="Tian X."/>
            <person name="Jiao Y."/>
            <person name="Liang X."/>
            <person name="Jin J."/>
            <person name="Gao L."/>
            <person name="Zheng W."/>
            <person name="Hao B."/>
            <person name="Liu S.-M."/>
            <person name="Wang W."/>
            <person name="Yuan L."/>
            <person name="Cao M."/>
            <person name="McDermott J."/>
            <person name="Samudrala R."/>
            <person name="Wang J."/>
            <person name="Wong G.K.-S."/>
            <person name="Yang H."/>
        </authorList>
    </citation>
    <scope>NUCLEOTIDE SEQUENCE [LARGE SCALE GENOMIC DNA]</scope>
    <source>
        <strain>cv. Nipponbare</strain>
    </source>
</reference>
<reference key="6">
    <citation type="journal article" date="2003" name="Science">
        <title>Collection, mapping, and annotation of over 28,000 cDNA clones from japonica rice.</title>
        <authorList>
            <consortium name="The rice full-length cDNA consortium"/>
        </authorList>
    </citation>
    <scope>NUCLEOTIDE SEQUENCE [LARGE SCALE MRNA]</scope>
    <source>
        <strain>cv. Nipponbare</strain>
    </source>
</reference>
<reference key="7">
    <citation type="journal article" date="2006" name="Plant Mol. Biol.">
        <title>OsGLU1, a putative membrane-bound endo-1,4-beta-D-glucanase from rice, affects plant internode elongation.</title>
        <authorList>
            <person name="Zhou H.-L."/>
            <person name="He S.-J."/>
            <person name="Cao Y.-R."/>
            <person name="Chen T."/>
            <person name="Du B.-X."/>
            <person name="Chu C.-C."/>
            <person name="Zhang J.-S."/>
            <person name="Chen S.-Y."/>
        </authorList>
    </citation>
    <scope>TISSUE SPECIFICITY</scope>
</reference>
<keyword id="KW-0119">Carbohydrate metabolism</keyword>
<keyword id="KW-0961">Cell wall biogenesis/degradation</keyword>
<keyword id="KW-0136">Cellulose degradation</keyword>
<keyword id="KW-0325">Glycoprotein</keyword>
<keyword id="KW-0326">Glycosidase</keyword>
<keyword id="KW-0378">Hydrolase</keyword>
<keyword id="KW-0624">Polysaccharide degradation</keyword>
<keyword id="KW-1185">Reference proteome</keyword>
<keyword id="KW-0964">Secreted</keyword>
<keyword id="KW-0732">Signal</keyword>
<organism>
    <name type="scientific">Oryza sativa subsp. japonica</name>
    <name type="common">Rice</name>
    <dbReference type="NCBI Taxonomy" id="39947"/>
    <lineage>
        <taxon>Eukaryota</taxon>
        <taxon>Viridiplantae</taxon>
        <taxon>Streptophyta</taxon>
        <taxon>Embryophyta</taxon>
        <taxon>Tracheophyta</taxon>
        <taxon>Spermatophyta</taxon>
        <taxon>Magnoliopsida</taxon>
        <taxon>Liliopsida</taxon>
        <taxon>Poales</taxon>
        <taxon>Poaceae</taxon>
        <taxon>BOP clade</taxon>
        <taxon>Oryzoideae</taxon>
        <taxon>Oryzeae</taxon>
        <taxon>Oryzinae</taxon>
        <taxon>Oryza</taxon>
        <taxon>Oryza sativa</taxon>
    </lineage>
</organism>
<feature type="signal peptide" evidence="2">
    <location>
        <begin position="1"/>
        <end position="24"/>
    </location>
</feature>
<feature type="chain" id="PRO_0000249278" description="Endoglucanase 1">
    <location>
        <begin position="25"/>
        <end position="640"/>
    </location>
</feature>
<feature type="active site" description="Nucleophile" evidence="5">
    <location>
        <position position="94"/>
    </location>
</feature>
<feature type="active site" evidence="3">
    <location>
        <position position="433"/>
    </location>
</feature>
<feature type="active site" evidence="4">
    <location>
        <position position="485"/>
    </location>
</feature>
<feature type="active site" evidence="4">
    <location>
        <position position="494"/>
    </location>
</feature>
<feature type="glycosylation site" description="N-linked (GlcNAc...) asparagine" evidence="2">
    <location>
        <position position="528"/>
    </location>
</feature>
<feature type="glycosylation site" description="N-linked (GlcNAc...) asparagine" evidence="2">
    <location>
        <position position="548"/>
    </location>
</feature>
<feature type="sequence conflict" description="In Ref. 6; AK111165." evidence="7" ref="6">
    <original>L</original>
    <variation>F</variation>
    <location>
        <position position="605"/>
    </location>
</feature>
<accession>Q5NAT8</accession>
<accession>A0A0P0UZV3</accession>
<accession>Q0JPJ3</accession>
<dbReference type="EC" id="3.2.1.4"/>
<dbReference type="EMBL" id="AP002094">
    <property type="protein sequence ID" value="BAD81358.1"/>
    <property type="molecule type" value="Genomic_DNA"/>
</dbReference>
<dbReference type="EMBL" id="AP002745">
    <property type="protein sequence ID" value="BAD81424.1"/>
    <property type="molecule type" value="Genomic_DNA"/>
</dbReference>
<dbReference type="EMBL" id="AP008207">
    <property type="protein sequence ID" value="BAF04335.1"/>
    <property type="molecule type" value="Genomic_DNA"/>
</dbReference>
<dbReference type="EMBL" id="AP014957">
    <property type="protein sequence ID" value="BAS71063.1"/>
    <property type="molecule type" value="Genomic_DNA"/>
</dbReference>
<dbReference type="EMBL" id="CM000138">
    <property type="protein sequence ID" value="EAZ11062.1"/>
    <property type="molecule type" value="Genomic_DNA"/>
</dbReference>
<dbReference type="EMBL" id="AK111165">
    <property type="status" value="NOT_ANNOTATED_CDS"/>
    <property type="molecule type" value="mRNA"/>
</dbReference>
<dbReference type="SMR" id="Q5NAT8"/>
<dbReference type="FunCoup" id="Q5NAT8">
    <property type="interactions" value="233"/>
</dbReference>
<dbReference type="STRING" id="39947.Q5NAT8"/>
<dbReference type="CAZy" id="CBM49">
    <property type="family name" value="Carbohydrate-Binding Module Family 49"/>
</dbReference>
<dbReference type="CAZy" id="GH9">
    <property type="family name" value="Glycoside Hydrolase Family 9"/>
</dbReference>
<dbReference type="GlyCosmos" id="Q5NAT8">
    <property type="glycosylation" value="2 sites, No reported glycans"/>
</dbReference>
<dbReference type="PaxDb" id="39947-Q5NAT8"/>
<dbReference type="EnsemblPlants" id="Os01t0219600-00">
    <property type="protein sequence ID" value="Os01t0219600-00"/>
    <property type="gene ID" value="Os01g0219600"/>
</dbReference>
<dbReference type="GeneID" id="4324641"/>
<dbReference type="Gramene" id="Os01t0219600-00">
    <property type="protein sequence ID" value="Os01t0219600-00"/>
    <property type="gene ID" value="Os01g0219600"/>
</dbReference>
<dbReference type="KEGG" id="dosa:Os01g0219600"/>
<dbReference type="KEGG" id="osa:4324641"/>
<dbReference type="eggNOG" id="ENOG502QRF6">
    <property type="taxonomic scope" value="Eukaryota"/>
</dbReference>
<dbReference type="HOGENOM" id="CLU_008926_1_4_1"/>
<dbReference type="InParanoid" id="Q5NAT8"/>
<dbReference type="OMA" id="GNQRIAW"/>
<dbReference type="OrthoDB" id="10257085at2759"/>
<dbReference type="Proteomes" id="UP000000763">
    <property type="component" value="Chromosome 1"/>
</dbReference>
<dbReference type="Proteomes" id="UP000007752">
    <property type="component" value="Chromosome 1"/>
</dbReference>
<dbReference type="Proteomes" id="UP000059680">
    <property type="component" value="Chromosome 1"/>
</dbReference>
<dbReference type="GO" id="GO:0005576">
    <property type="term" value="C:extracellular region"/>
    <property type="evidence" value="ECO:0007669"/>
    <property type="project" value="UniProtKB-SubCell"/>
</dbReference>
<dbReference type="GO" id="GO:0030246">
    <property type="term" value="F:carbohydrate binding"/>
    <property type="evidence" value="ECO:0007669"/>
    <property type="project" value="InterPro"/>
</dbReference>
<dbReference type="GO" id="GO:0008810">
    <property type="term" value="F:cellulase activity"/>
    <property type="evidence" value="ECO:0007669"/>
    <property type="project" value="UniProtKB-EC"/>
</dbReference>
<dbReference type="GO" id="GO:0071555">
    <property type="term" value="P:cell wall organization"/>
    <property type="evidence" value="ECO:0007669"/>
    <property type="project" value="UniProtKB-KW"/>
</dbReference>
<dbReference type="GO" id="GO:0030245">
    <property type="term" value="P:cellulose catabolic process"/>
    <property type="evidence" value="ECO:0007669"/>
    <property type="project" value="UniProtKB-KW"/>
</dbReference>
<dbReference type="FunFam" id="1.50.10.10:FF:000020">
    <property type="entry name" value="Endoglucanase"/>
    <property type="match status" value="1"/>
</dbReference>
<dbReference type="Gene3D" id="1.50.10.10">
    <property type="match status" value="1"/>
</dbReference>
<dbReference type="InterPro" id="IPR008928">
    <property type="entry name" value="6-hairpin_glycosidase_sf"/>
</dbReference>
<dbReference type="InterPro" id="IPR012341">
    <property type="entry name" value="6hp_glycosidase-like_sf"/>
</dbReference>
<dbReference type="InterPro" id="IPR019028">
    <property type="entry name" value="CBM_49"/>
</dbReference>
<dbReference type="InterPro" id="IPR001701">
    <property type="entry name" value="Glyco_hydro_9"/>
</dbReference>
<dbReference type="InterPro" id="IPR033126">
    <property type="entry name" value="Glyco_hydro_9_Asp/Glu_AS"/>
</dbReference>
<dbReference type="InterPro" id="IPR018221">
    <property type="entry name" value="Glyco_hydro_9_His_AS"/>
</dbReference>
<dbReference type="PANTHER" id="PTHR22298">
    <property type="entry name" value="ENDO-1,4-BETA-GLUCANASE"/>
    <property type="match status" value="1"/>
</dbReference>
<dbReference type="Pfam" id="PF09478">
    <property type="entry name" value="CBM49"/>
    <property type="match status" value="1"/>
</dbReference>
<dbReference type="Pfam" id="PF00759">
    <property type="entry name" value="Glyco_hydro_9"/>
    <property type="match status" value="1"/>
</dbReference>
<dbReference type="SUPFAM" id="SSF48208">
    <property type="entry name" value="Six-hairpin glycosidases"/>
    <property type="match status" value="1"/>
</dbReference>
<dbReference type="PROSITE" id="PS60032">
    <property type="entry name" value="GH9_1"/>
    <property type="match status" value="1"/>
</dbReference>
<dbReference type="PROSITE" id="PS00592">
    <property type="entry name" value="GH9_2"/>
    <property type="match status" value="1"/>
</dbReference>
<dbReference type="PROSITE" id="PS00698">
    <property type="entry name" value="GH9_3"/>
    <property type="match status" value="1"/>
</dbReference>
<evidence type="ECO:0000250" key="1"/>
<evidence type="ECO:0000255" key="2"/>
<evidence type="ECO:0000255" key="3">
    <source>
        <dbReference type="PROSITE-ProRule" id="PRU10059"/>
    </source>
</evidence>
<evidence type="ECO:0000255" key="4">
    <source>
        <dbReference type="PROSITE-ProRule" id="PRU10060"/>
    </source>
</evidence>
<evidence type="ECO:0000255" key="5">
    <source>
        <dbReference type="PROSITE-ProRule" id="PRU10140"/>
    </source>
</evidence>
<evidence type="ECO:0000269" key="6">
    <source>
    </source>
</evidence>
<evidence type="ECO:0000305" key="7"/>
<protein>
    <recommendedName>
        <fullName>Endoglucanase 1</fullName>
        <ecNumber>3.2.1.4</ecNumber>
    </recommendedName>
    <alternativeName>
        <fullName>Endo-1,4-beta glucanase 1</fullName>
    </alternativeName>
    <alternativeName>
        <fullName>OsCel9B</fullName>
    </alternativeName>
    <alternativeName>
        <fullName>OsGLU7</fullName>
    </alternativeName>
</protein>
<gene>
    <name type="primary">GLU7</name>
    <name type="ordered locus">Os01g0219600</name>
    <name type="ordered locus">LOC_Os01g12030</name>
    <name type="ORF">OsJ_000887</name>
    <name type="ORF">P0483F08.8</name>
    <name type="ORF">P0489G09.23</name>
</gene>
<sequence>MARRGGAAASSSMANLLGVALVLAATAQTSARGGGGGGRHDYRMALSKSILYFEAQRSGVLPGNQRIAWRANSGLADGKANGVDLVGGYYDAGDNVKFGFPMAFTVTMMAWSVLEYGKQMAAAGELGHAMDAVRWGADYFVKAHPAPNVLYGEVGDGDSDHVCWQRPEDMTTSRQAYRLDPQHPGSDLAGETATALAAASLVFRSSNPGYANQLLQHSKQLFDFADKYRGKYDDSMPVVKKFYGSFSGYGDELLWASAWLYQATDNRRYLDYLANNGDALGGTGWATNEFGWDVKYPGVQVLAAKFLLQGKAGPHAAVLRRYQRNADVFACSCLGKGGGGGNVGRTPGGLMYHQGWNNLQFVTGASFLLAVYADHLAAAGRGQAVVRCQAGPAARASELVALAKSQVDYILGSNPRGISYMVGYGARYPRRAHHRGASIVSIRANPSFVSCKDGYASWFGRAGSNPNLLDGAVVGGPDGRDGFADERNNYQQTEVATYNNAPLMGVLARLAGGGRGGLAEAAIKRPDNQTLLPPLAAAASPVEITQLNATASWKKDGRTYRRYAATVSNRSPAGGKTVEELHIGIGKPHGPVWGLEKAARYGYVLPSSLAAGESAAFAYVVRGRAAPPPADVWVIGYKLV</sequence>
<proteinExistence type="evidence at transcript level"/>
<comment type="catalytic activity">
    <reaction>
        <text>Endohydrolysis of (1-&gt;4)-beta-D-glucosidic linkages in cellulose, lichenin and cereal beta-D-glucans.</text>
        <dbReference type="EC" id="3.2.1.4"/>
    </reaction>
</comment>
<comment type="subcellular location">
    <subcellularLocation>
        <location evidence="1">Secreted</location>
    </subcellularLocation>
</comment>
<comment type="tissue specificity">
    <text evidence="6">Expressed in roots, leaf sheaths and flowers.</text>
</comment>
<comment type="similarity">
    <text evidence="5 7">Belongs to the glycosyl hydrolase 9 (cellulase E) family.</text>
</comment>